<protein>
    <recommendedName>
        <fullName evidence="2">GTP cyclohydrolase 1</fullName>
        <ecNumber evidence="2">3.5.4.16</ecNumber>
    </recommendedName>
    <alternativeName>
        <fullName evidence="2">GTP cyclohydrolase I</fullName>
        <shortName evidence="2">GTP-CH-I</shortName>
    </alternativeName>
</protein>
<name>GCH1_RICB8</name>
<comment type="catalytic activity">
    <reaction evidence="2">
        <text>GTP + H2O = 7,8-dihydroneopterin 3'-triphosphate + formate + H(+)</text>
        <dbReference type="Rhea" id="RHEA:17473"/>
        <dbReference type="ChEBI" id="CHEBI:15377"/>
        <dbReference type="ChEBI" id="CHEBI:15378"/>
        <dbReference type="ChEBI" id="CHEBI:15740"/>
        <dbReference type="ChEBI" id="CHEBI:37565"/>
        <dbReference type="ChEBI" id="CHEBI:58462"/>
        <dbReference type="EC" id="3.5.4.16"/>
    </reaction>
</comment>
<comment type="pathway">
    <text evidence="2">Cofactor biosynthesis; 7,8-dihydroneopterin triphosphate biosynthesis; 7,8-dihydroneopterin triphosphate from GTP: step 1/1.</text>
</comment>
<comment type="subunit">
    <text evidence="1">Toroid-shaped homodecamer, composed of two pentamers of five dimers.</text>
</comment>
<comment type="similarity">
    <text evidence="2">Belongs to the GTP cyclohydrolase I family.</text>
</comment>
<organism>
    <name type="scientific">Rickettsia bellii (strain OSU 85-389)</name>
    <dbReference type="NCBI Taxonomy" id="391896"/>
    <lineage>
        <taxon>Bacteria</taxon>
        <taxon>Pseudomonadati</taxon>
        <taxon>Pseudomonadota</taxon>
        <taxon>Alphaproteobacteria</taxon>
        <taxon>Rickettsiales</taxon>
        <taxon>Rickettsiaceae</taxon>
        <taxon>Rickettsieae</taxon>
        <taxon>Rickettsia</taxon>
        <taxon>belli group</taxon>
    </lineage>
</organism>
<evidence type="ECO:0000250" key="1"/>
<evidence type="ECO:0000255" key="2">
    <source>
        <dbReference type="HAMAP-Rule" id="MF_00223"/>
    </source>
</evidence>
<keyword id="KW-0342">GTP-binding</keyword>
<keyword id="KW-0378">Hydrolase</keyword>
<keyword id="KW-0479">Metal-binding</keyword>
<keyword id="KW-0547">Nucleotide-binding</keyword>
<keyword id="KW-0554">One-carbon metabolism</keyword>
<keyword id="KW-0862">Zinc</keyword>
<sequence>MTIKKPTKEEAKEAVRTLLRFIGEDPNREGLFKTPDRVIKSYEEIFSGYGKNIEEILETKFSDTGNFQDFISLEGIKFTSFCEHHMLPFSGTVHIAYIPDNCIVGISKLARIVNAFAKRLQIQEKMTVQIAESVQENLKPLGVAVKISALHSCMSMRGVMQDNSIMNTMHYTGIFAEQQKYRHEFLNLTSKK</sequence>
<proteinExistence type="inferred from homology"/>
<feature type="chain" id="PRO_1000043724" description="GTP cyclohydrolase 1">
    <location>
        <begin position="1"/>
        <end position="192"/>
    </location>
</feature>
<feature type="binding site" evidence="2">
    <location>
        <position position="82"/>
    </location>
    <ligand>
        <name>Zn(2+)</name>
        <dbReference type="ChEBI" id="CHEBI:29105"/>
    </ligand>
</feature>
<feature type="binding site" evidence="2">
    <location>
        <position position="85"/>
    </location>
    <ligand>
        <name>Zn(2+)</name>
        <dbReference type="ChEBI" id="CHEBI:29105"/>
    </ligand>
</feature>
<feature type="binding site" evidence="2">
    <location>
        <position position="153"/>
    </location>
    <ligand>
        <name>Zn(2+)</name>
        <dbReference type="ChEBI" id="CHEBI:29105"/>
    </ligand>
</feature>
<gene>
    <name evidence="2" type="primary">folE</name>
    <name type="ordered locus">A1I_05145</name>
</gene>
<accession>A8GUB6</accession>
<reference key="1">
    <citation type="submission" date="2007-09" db="EMBL/GenBank/DDBJ databases">
        <title>Complete genome sequencing of Rickettsia bellii.</title>
        <authorList>
            <person name="Madan A."/>
            <person name="Lee H."/>
            <person name="Madan A."/>
            <person name="Yoon J.-G."/>
            <person name="Ryu G.-Y."/>
            <person name="Dasch G."/>
            <person name="Ereemeva M."/>
        </authorList>
    </citation>
    <scope>NUCLEOTIDE SEQUENCE [LARGE SCALE GENOMIC DNA]</scope>
    <source>
        <strain>OSU 85-389</strain>
    </source>
</reference>
<dbReference type="EC" id="3.5.4.16" evidence="2"/>
<dbReference type="EMBL" id="CP000849">
    <property type="protein sequence ID" value="ABV79358.1"/>
    <property type="molecule type" value="Genomic_DNA"/>
</dbReference>
<dbReference type="SMR" id="A8GUB6"/>
<dbReference type="KEGG" id="rbo:A1I_05145"/>
<dbReference type="HOGENOM" id="CLU_049768_3_1_5"/>
<dbReference type="UniPathway" id="UPA00848">
    <property type="reaction ID" value="UER00151"/>
</dbReference>
<dbReference type="GO" id="GO:0005737">
    <property type="term" value="C:cytoplasm"/>
    <property type="evidence" value="ECO:0007669"/>
    <property type="project" value="TreeGrafter"/>
</dbReference>
<dbReference type="GO" id="GO:0005525">
    <property type="term" value="F:GTP binding"/>
    <property type="evidence" value="ECO:0007669"/>
    <property type="project" value="UniProtKB-KW"/>
</dbReference>
<dbReference type="GO" id="GO:0003934">
    <property type="term" value="F:GTP cyclohydrolase I activity"/>
    <property type="evidence" value="ECO:0007669"/>
    <property type="project" value="UniProtKB-UniRule"/>
</dbReference>
<dbReference type="GO" id="GO:0008270">
    <property type="term" value="F:zinc ion binding"/>
    <property type="evidence" value="ECO:0007669"/>
    <property type="project" value="UniProtKB-UniRule"/>
</dbReference>
<dbReference type="GO" id="GO:0006730">
    <property type="term" value="P:one-carbon metabolic process"/>
    <property type="evidence" value="ECO:0007669"/>
    <property type="project" value="UniProtKB-UniRule"/>
</dbReference>
<dbReference type="GO" id="GO:0006729">
    <property type="term" value="P:tetrahydrobiopterin biosynthetic process"/>
    <property type="evidence" value="ECO:0007669"/>
    <property type="project" value="TreeGrafter"/>
</dbReference>
<dbReference type="GO" id="GO:0046654">
    <property type="term" value="P:tetrahydrofolate biosynthetic process"/>
    <property type="evidence" value="ECO:0007669"/>
    <property type="project" value="UniProtKB-UniRule"/>
</dbReference>
<dbReference type="FunFam" id="1.10.286.10:FF:000001">
    <property type="entry name" value="GTP cyclohydrolase 1"/>
    <property type="match status" value="1"/>
</dbReference>
<dbReference type="FunFam" id="3.30.1130.10:FF:000001">
    <property type="entry name" value="GTP cyclohydrolase 1"/>
    <property type="match status" value="1"/>
</dbReference>
<dbReference type="Gene3D" id="1.10.286.10">
    <property type="match status" value="1"/>
</dbReference>
<dbReference type="Gene3D" id="3.30.1130.10">
    <property type="match status" value="1"/>
</dbReference>
<dbReference type="HAMAP" id="MF_00223">
    <property type="entry name" value="FolE"/>
    <property type="match status" value="1"/>
</dbReference>
<dbReference type="InterPro" id="IPR043133">
    <property type="entry name" value="GTP-CH-I_C/QueF"/>
</dbReference>
<dbReference type="InterPro" id="IPR043134">
    <property type="entry name" value="GTP-CH-I_N"/>
</dbReference>
<dbReference type="InterPro" id="IPR001474">
    <property type="entry name" value="GTP_CycHdrlase_I"/>
</dbReference>
<dbReference type="InterPro" id="IPR018234">
    <property type="entry name" value="GTP_CycHdrlase_I_CS"/>
</dbReference>
<dbReference type="InterPro" id="IPR020602">
    <property type="entry name" value="GTP_CycHdrlase_I_dom"/>
</dbReference>
<dbReference type="NCBIfam" id="TIGR00063">
    <property type="entry name" value="folE"/>
    <property type="match status" value="1"/>
</dbReference>
<dbReference type="NCBIfam" id="NF006825">
    <property type="entry name" value="PRK09347.1-2"/>
    <property type="match status" value="1"/>
</dbReference>
<dbReference type="NCBIfam" id="NF006826">
    <property type="entry name" value="PRK09347.1-3"/>
    <property type="match status" value="1"/>
</dbReference>
<dbReference type="PANTHER" id="PTHR11109:SF7">
    <property type="entry name" value="GTP CYCLOHYDROLASE 1"/>
    <property type="match status" value="1"/>
</dbReference>
<dbReference type="PANTHER" id="PTHR11109">
    <property type="entry name" value="GTP CYCLOHYDROLASE I"/>
    <property type="match status" value="1"/>
</dbReference>
<dbReference type="Pfam" id="PF01227">
    <property type="entry name" value="GTP_cyclohydroI"/>
    <property type="match status" value="1"/>
</dbReference>
<dbReference type="SUPFAM" id="SSF55620">
    <property type="entry name" value="Tetrahydrobiopterin biosynthesis enzymes-like"/>
    <property type="match status" value="1"/>
</dbReference>
<dbReference type="PROSITE" id="PS00859">
    <property type="entry name" value="GTP_CYCLOHYDROL_1_1"/>
    <property type="match status" value="1"/>
</dbReference>
<dbReference type="PROSITE" id="PS00860">
    <property type="entry name" value="GTP_CYCLOHYDROL_1_2"/>
    <property type="match status" value="1"/>
</dbReference>